<comment type="function">
    <text evidence="3">Part of an unusual four-component transporter, which is required for protection against the killing factor SdpC (sporulation-delaying protein).</text>
</comment>
<comment type="subunit">
    <text evidence="3">Part of a complex composed of YknX, YknY and YknZ. The complex interacts with YknW.</text>
</comment>
<comment type="subcellular location">
    <subcellularLocation>
        <location evidence="3">Cell membrane</location>
        <topology evidence="4">Peripheral membrane protein</topology>
        <orientation evidence="4">Cytoplasmic side</orientation>
    </subcellularLocation>
</comment>
<comment type="induction">
    <text evidence="3">Expressed in exponential-phase cells.</text>
</comment>
<comment type="similarity">
    <text evidence="5">Belongs to the ABC transporter superfamily.</text>
</comment>
<keyword id="KW-0067">ATP-binding</keyword>
<keyword id="KW-1003">Cell membrane</keyword>
<keyword id="KW-0472">Membrane</keyword>
<keyword id="KW-0547">Nucleotide-binding</keyword>
<keyword id="KW-1185">Reference proteome</keyword>
<keyword id="KW-1278">Translocase</keyword>
<keyword id="KW-0813">Transport</keyword>
<gene>
    <name type="primary">yknY</name>
    <name evidence="6" type="ordered locus">BSU14360</name>
</gene>
<organism>
    <name type="scientific">Bacillus subtilis (strain 168)</name>
    <dbReference type="NCBI Taxonomy" id="224308"/>
    <lineage>
        <taxon>Bacteria</taxon>
        <taxon>Bacillati</taxon>
        <taxon>Bacillota</taxon>
        <taxon>Bacilli</taxon>
        <taxon>Bacillales</taxon>
        <taxon>Bacillaceae</taxon>
        <taxon>Bacillus</taxon>
    </lineage>
</organism>
<name>YKNY_BACSU</name>
<sequence length="230" mass="25272">MIQLSNVRKSYQIGKETFDVLHSIDLDIHQGEYVSIMGPSGSGKSTIMNIIGCLDRPTSGTYQLDGEDISSYKDKELAAVRNRSIGFVFQQFQLLPRLNAKKNVELPMIYSGIGKKERQERAERALEKVGLADRMLHMPNELSGGQKQRVAIARAIVNEPKLILADEPTGALDTKTSEAIMDQFTALNAEGTTIVLVTHEPEVADCTNRIVMVRDGNIVPASSGQRSVGE</sequence>
<dbReference type="EC" id="7.6.2.-" evidence="1"/>
<dbReference type="EMBL" id="AF012285">
    <property type="protein sequence ID" value="AAC24910.1"/>
    <property type="molecule type" value="Genomic_DNA"/>
</dbReference>
<dbReference type="EMBL" id="AL009126">
    <property type="protein sequence ID" value="CAB13309.1"/>
    <property type="molecule type" value="Genomic_DNA"/>
</dbReference>
<dbReference type="PIR" id="D69858">
    <property type="entry name" value="D69858"/>
</dbReference>
<dbReference type="RefSeq" id="WP_003232356.1">
    <property type="nucleotide sequence ID" value="NZ_OZ025638.1"/>
</dbReference>
<dbReference type="SMR" id="O31711"/>
<dbReference type="FunCoup" id="O31711">
    <property type="interactions" value="528"/>
</dbReference>
<dbReference type="STRING" id="224308.BSU14360"/>
<dbReference type="TCDB" id="3.A.1.122.2">
    <property type="family name" value="the atp-binding cassette (abc) superfamily"/>
</dbReference>
<dbReference type="PaxDb" id="224308-BSU14360"/>
<dbReference type="EnsemblBacteria" id="CAB13309">
    <property type="protein sequence ID" value="CAB13309"/>
    <property type="gene ID" value="BSU_14360"/>
</dbReference>
<dbReference type="GeneID" id="938766"/>
<dbReference type="KEGG" id="bsu:BSU14360"/>
<dbReference type="PATRIC" id="fig|224308.179.peg.1566"/>
<dbReference type="eggNOG" id="COG1136">
    <property type="taxonomic scope" value="Bacteria"/>
</dbReference>
<dbReference type="InParanoid" id="O31711"/>
<dbReference type="OrthoDB" id="9791546at2"/>
<dbReference type="PhylomeDB" id="O31711"/>
<dbReference type="BioCyc" id="BSUB:BSU14360-MONOMER"/>
<dbReference type="Proteomes" id="UP000001570">
    <property type="component" value="Chromosome"/>
</dbReference>
<dbReference type="GO" id="GO:0005886">
    <property type="term" value="C:plasma membrane"/>
    <property type="evidence" value="ECO:0000318"/>
    <property type="project" value="GO_Central"/>
</dbReference>
<dbReference type="GO" id="GO:0005524">
    <property type="term" value="F:ATP binding"/>
    <property type="evidence" value="ECO:0007669"/>
    <property type="project" value="UniProtKB-KW"/>
</dbReference>
<dbReference type="GO" id="GO:0016887">
    <property type="term" value="F:ATP hydrolysis activity"/>
    <property type="evidence" value="ECO:0007669"/>
    <property type="project" value="InterPro"/>
</dbReference>
<dbReference type="GO" id="GO:0022857">
    <property type="term" value="F:transmembrane transporter activity"/>
    <property type="evidence" value="ECO:0000318"/>
    <property type="project" value="GO_Central"/>
</dbReference>
<dbReference type="GO" id="GO:0055085">
    <property type="term" value="P:transmembrane transport"/>
    <property type="evidence" value="ECO:0000318"/>
    <property type="project" value="GO_Central"/>
</dbReference>
<dbReference type="CDD" id="cd03255">
    <property type="entry name" value="ABC_MJ0796_LolCDE_FtsE"/>
    <property type="match status" value="1"/>
</dbReference>
<dbReference type="FunFam" id="3.40.50.300:FF:000032">
    <property type="entry name" value="Export ABC transporter ATP-binding protein"/>
    <property type="match status" value="1"/>
</dbReference>
<dbReference type="Gene3D" id="3.40.50.300">
    <property type="entry name" value="P-loop containing nucleotide triphosphate hydrolases"/>
    <property type="match status" value="1"/>
</dbReference>
<dbReference type="InterPro" id="IPR003593">
    <property type="entry name" value="AAA+_ATPase"/>
</dbReference>
<dbReference type="InterPro" id="IPR003439">
    <property type="entry name" value="ABC_transporter-like_ATP-bd"/>
</dbReference>
<dbReference type="InterPro" id="IPR017871">
    <property type="entry name" value="ABC_transporter-like_CS"/>
</dbReference>
<dbReference type="InterPro" id="IPR017911">
    <property type="entry name" value="MacB-like_ATP-bd"/>
</dbReference>
<dbReference type="InterPro" id="IPR027417">
    <property type="entry name" value="P-loop_NTPase"/>
</dbReference>
<dbReference type="PANTHER" id="PTHR42798:SF2">
    <property type="entry name" value="ABC TRANSPORTER ATP-BINDING PROTEIN MG467-RELATED"/>
    <property type="match status" value="1"/>
</dbReference>
<dbReference type="PANTHER" id="PTHR42798">
    <property type="entry name" value="LIPOPROTEIN-RELEASING SYSTEM ATP-BINDING PROTEIN LOLD"/>
    <property type="match status" value="1"/>
</dbReference>
<dbReference type="Pfam" id="PF00005">
    <property type="entry name" value="ABC_tran"/>
    <property type="match status" value="1"/>
</dbReference>
<dbReference type="SMART" id="SM00382">
    <property type="entry name" value="AAA"/>
    <property type="match status" value="1"/>
</dbReference>
<dbReference type="SUPFAM" id="SSF52540">
    <property type="entry name" value="P-loop containing nucleoside triphosphate hydrolases"/>
    <property type="match status" value="1"/>
</dbReference>
<dbReference type="PROSITE" id="PS00211">
    <property type="entry name" value="ABC_TRANSPORTER_1"/>
    <property type="match status" value="1"/>
</dbReference>
<dbReference type="PROSITE" id="PS50893">
    <property type="entry name" value="ABC_TRANSPORTER_2"/>
    <property type="match status" value="1"/>
</dbReference>
<feature type="chain" id="PRO_0000375892" description="Uncharacterized ABC transporter ATP-binding protein YknY">
    <location>
        <begin position="1"/>
        <end position="230"/>
    </location>
</feature>
<feature type="domain" description="ABC transporter" evidence="2">
    <location>
        <begin position="2"/>
        <end position="230"/>
    </location>
</feature>
<feature type="binding site" evidence="2">
    <location>
        <begin position="38"/>
        <end position="45"/>
    </location>
    <ligand>
        <name>ATP</name>
        <dbReference type="ChEBI" id="CHEBI:30616"/>
    </ligand>
</feature>
<evidence type="ECO:0000250" key="1">
    <source>
        <dbReference type="UniProtKB" id="P75831"/>
    </source>
</evidence>
<evidence type="ECO:0000255" key="2">
    <source>
        <dbReference type="PROSITE-ProRule" id="PRU00434"/>
    </source>
</evidence>
<evidence type="ECO:0000269" key="3">
    <source>
    </source>
</evidence>
<evidence type="ECO:0000303" key="4">
    <source>
    </source>
</evidence>
<evidence type="ECO:0000305" key="5"/>
<evidence type="ECO:0000312" key="6">
    <source>
        <dbReference type="EMBL" id="CAB13309.1"/>
    </source>
</evidence>
<accession>O31711</accession>
<accession>Q7BVR8</accession>
<protein>
    <recommendedName>
        <fullName evidence="5">Uncharacterized ABC transporter ATP-binding protein YknY</fullName>
        <ecNumber evidence="1">7.6.2.-</ecNumber>
    </recommendedName>
</protein>
<proteinExistence type="evidence at protein level"/>
<reference key="1">
    <citation type="submission" date="1997-07" db="EMBL/GenBank/DDBJ databases">
        <title>Sequence analysis of the mobA-ampS region of the Bacillus subtilis chromosome.</title>
        <authorList>
            <person name="Caldwell R.M."/>
            <person name="Ferrari E."/>
        </authorList>
    </citation>
    <scope>NUCLEOTIDE SEQUENCE [GENOMIC DNA]</scope>
    <source>
        <strain>168</strain>
    </source>
</reference>
<reference key="2">
    <citation type="journal article" date="1997" name="Nature">
        <title>The complete genome sequence of the Gram-positive bacterium Bacillus subtilis.</title>
        <authorList>
            <person name="Kunst F."/>
            <person name="Ogasawara N."/>
            <person name="Moszer I."/>
            <person name="Albertini A.M."/>
            <person name="Alloni G."/>
            <person name="Azevedo V."/>
            <person name="Bertero M.G."/>
            <person name="Bessieres P."/>
            <person name="Bolotin A."/>
            <person name="Borchert S."/>
            <person name="Borriss R."/>
            <person name="Boursier L."/>
            <person name="Brans A."/>
            <person name="Braun M."/>
            <person name="Brignell S.C."/>
            <person name="Bron S."/>
            <person name="Brouillet S."/>
            <person name="Bruschi C.V."/>
            <person name="Caldwell B."/>
            <person name="Capuano V."/>
            <person name="Carter N.M."/>
            <person name="Choi S.-K."/>
            <person name="Codani J.-J."/>
            <person name="Connerton I.F."/>
            <person name="Cummings N.J."/>
            <person name="Daniel R.A."/>
            <person name="Denizot F."/>
            <person name="Devine K.M."/>
            <person name="Duesterhoeft A."/>
            <person name="Ehrlich S.D."/>
            <person name="Emmerson P.T."/>
            <person name="Entian K.-D."/>
            <person name="Errington J."/>
            <person name="Fabret C."/>
            <person name="Ferrari E."/>
            <person name="Foulger D."/>
            <person name="Fritz C."/>
            <person name="Fujita M."/>
            <person name="Fujita Y."/>
            <person name="Fuma S."/>
            <person name="Galizzi A."/>
            <person name="Galleron N."/>
            <person name="Ghim S.-Y."/>
            <person name="Glaser P."/>
            <person name="Goffeau A."/>
            <person name="Golightly E.J."/>
            <person name="Grandi G."/>
            <person name="Guiseppi G."/>
            <person name="Guy B.J."/>
            <person name="Haga K."/>
            <person name="Haiech J."/>
            <person name="Harwood C.R."/>
            <person name="Henaut A."/>
            <person name="Hilbert H."/>
            <person name="Holsappel S."/>
            <person name="Hosono S."/>
            <person name="Hullo M.-F."/>
            <person name="Itaya M."/>
            <person name="Jones L.-M."/>
            <person name="Joris B."/>
            <person name="Karamata D."/>
            <person name="Kasahara Y."/>
            <person name="Klaerr-Blanchard M."/>
            <person name="Klein C."/>
            <person name="Kobayashi Y."/>
            <person name="Koetter P."/>
            <person name="Koningstein G."/>
            <person name="Krogh S."/>
            <person name="Kumano M."/>
            <person name="Kurita K."/>
            <person name="Lapidus A."/>
            <person name="Lardinois S."/>
            <person name="Lauber J."/>
            <person name="Lazarevic V."/>
            <person name="Lee S.-M."/>
            <person name="Levine A."/>
            <person name="Liu H."/>
            <person name="Masuda S."/>
            <person name="Mauel C."/>
            <person name="Medigue C."/>
            <person name="Medina N."/>
            <person name="Mellado R.P."/>
            <person name="Mizuno M."/>
            <person name="Moestl D."/>
            <person name="Nakai S."/>
            <person name="Noback M."/>
            <person name="Noone D."/>
            <person name="O'Reilly M."/>
            <person name="Ogawa K."/>
            <person name="Ogiwara A."/>
            <person name="Oudega B."/>
            <person name="Park S.-H."/>
            <person name="Parro V."/>
            <person name="Pohl T.M."/>
            <person name="Portetelle D."/>
            <person name="Porwollik S."/>
            <person name="Prescott A.M."/>
            <person name="Presecan E."/>
            <person name="Pujic P."/>
            <person name="Purnelle B."/>
            <person name="Rapoport G."/>
            <person name="Rey M."/>
            <person name="Reynolds S."/>
            <person name="Rieger M."/>
            <person name="Rivolta C."/>
            <person name="Rocha E."/>
            <person name="Roche B."/>
            <person name="Rose M."/>
            <person name="Sadaie Y."/>
            <person name="Sato T."/>
            <person name="Scanlan E."/>
            <person name="Schleich S."/>
            <person name="Schroeter R."/>
            <person name="Scoffone F."/>
            <person name="Sekiguchi J."/>
            <person name="Sekowska A."/>
            <person name="Seror S.J."/>
            <person name="Serror P."/>
            <person name="Shin B.-S."/>
            <person name="Soldo B."/>
            <person name="Sorokin A."/>
            <person name="Tacconi E."/>
            <person name="Takagi T."/>
            <person name="Takahashi H."/>
            <person name="Takemaru K."/>
            <person name="Takeuchi M."/>
            <person name="Tamakoshi A."/>
            <person name="Tanaka T."/>
            <person name="Terpstra P."/>
            <person name="Tognoni A."/>
            <person name="Tosato V."/>
            <person name="Uchiyama S."/>
            <person name="Vandenbol M."/>
            <person name="Vannier F."/>
            <person name="Vassarotti A."/>
            <person name="Viari A."/>
            <person name="Wambutt R."/>
            <person name="Wedler E."/>
            <person name="Wedler H."/>
            <person name="Weitzenegger T."/>
            <person name="Winters P."/>
            <person name="Wipat A."/>
            <person name="Yamamoto H."/>
            <person name="Yamane K."/>
            <person name="Yasumoto K."/>
            <person name="Yata K."/>
            <person name="Yoshida K."/>
            <person name="Yoshikawa H.-F."/>
            <person name="Zumstein E."/>
            <person name="Yoshikawa H."/>
            <person name="Danchin A."/>
        </authorList>
    </citation>
    <scope>NUCLEOTIDE SEQUENCE [LARGE SCALE GENOMIC DNA]</scope>
    <source>
        <strain>168</strain>
    </source>
</reference>
<reference key="3">
    <citation type="journal article" date="2012" name="J. Bacteriol.">
        <title>YknWXYZ is an unusual four-component transporter with a role in protection against sporulation-delaying-protein-induced killing of Bacillus subtilis.</title>
        <authorList>
            <person name="Yamada Y."/>
            <person name="Tikhonova E.B."/>
            <person name="Zgurskaya H.I."/>
        </authorList>
    </citation>
    <scope>FUNCTION</scope>
    <scope>SUBUNIT</scope>
    <scope>SUBCELLULAR LOCATION</scope>
    <scope>INDUCTION</scope>
    <source>
        <strain>168</strain>
    </source>
</reference>